<keyword id="KW-0472">Membrane</keyword>
<keyword id="KW-0520">NAD</keyword>
<keyword id="KW-0560">Oxidoreductase</keyword>
<keyword id="KW-1185">Reference proteome</keyword>
<keyword id="KW-0812">Transmembrane</keyword>
<keyword id="KW-1133">Transmembrane helix</keyword>
<name>D42E1_BOVIN</name>
<proteinExistence type="evidence at transcript level"/>
<protein>
    <recommendedName>
        <fullName evidence="2">Short-chain dehydrogenase/reductase family 42E member 1</fullName>
        <ecNumber>1.1.1.-</ecNumber>
    </recommendedName>
</protein>
<comment type="subcellular location">
    <subcellularLocation>
        <location evidence="4">Membrane</location>
        <topology evidence="4">Multi-pass membrane protein</topology>
    </subcellularLocation>
</comment>
<comment type="similarity">
    <text evidence="4">Belongs to the 3-beta-HSD family.</text>
</comment>
<comment type="sequence caution" evidence="4">
    <conflict type="erroneous termination">
        <sequence resource="EMBL-CDS" id="AAX46671"/>
    </conflict>
    <text>Extended C-terminus.</text>
</comment>
<dbReference type="EC" id="1.1.1.-"/>
<dbReference type="EMBL" id="BT021824">
    <property type="protein sequence ID" value="AAX46671.1"/>
    <property type="status" value="ALT_SEQ"/>
    <property type="molecule type" value="mRNA"/>
</dbReference>
<dbReference type="EMBL" id="BC109694">
    <property type="protein sequence ID" value="AAI09695.1"/>
    <property type="molecule type" value="mRNA"/>
</dbReference>
<dbReference type="RefSeq" id="NP_001073761.2">
    <property type="nucleotide sequence ID" value="NM_001080292.2"/>
</dbReference>
<dbReference type="RefSeq" id="XP_010812668.2">
    <property type="nucleotide sequence ID" value="XM_010814366.4"/>
</dbReference>
<dbReference type="SMR" id="Q32L94"/>
<dbReference type="FunCoup" id="Q32L94">
    <property type="interactions" value="360"/>
</dbReference>
<dbReference type="STRING" id="9913.ENSBTAP00000045705"/>
<dbReference type="PaxDb" id="9913-ENSBTAP00000024475"/>
<dbReference type="Ensembl" id="ENSBTAT00000048714.3">
    <property type="protein sequence ID" value="ENSBTAP00000045705.3"/>
    <property type="gene ID" value="ENSBTAG00000018394.7"/>
</dbReference>
<dbReference type="GeneID" id="532489"/>
<dbReference type="KEGG" id="bta:532489"/>
<dbReference type="CTD" id="93517"/>
<dbReference type="VEuPathDB" id="HostDB:ENSBTAG00000018394"/>
<dbReference type="VGNC" id="VGNC:34397">
    <property type="gene designation" value="SDR42E1"/>
</dbReference>
<dbReference type="eggNOG" id="KOG1430">
    <property type="taxonomic scope" value="Eukaryota"/>
</dbReference>
<dbReference type="GeneTree" id="ENSGT00940000158070"/>
<dbReference type="InParanoid" id="Q32L94"/>
<dbReference type="OMA" id="IGAYKRS"/>
<dbReference type="OrthoDB" id="2735536at2759"/>
<dbReference type="Proteomes" id="UP000009136">
    <property type="component" value="Chromosome 18"/>
</dbReference>
<dbReference type="Bgee" id="ENSBTAG00000018394">
    <property type="expression patterns" value="Expressed in liver and 98 other cell types or tissues"/>
</dbReference>
<dbReference type="GO" id="GO:0016020">
    <property type="term" value="C:membrane"/>
    <property type="evidence" value="ECO:0007669"/>
    <property type="project" value="UniProtKB-SubCell"/>
</dbReference>
<dbReference type="GO" id="GO:0016616">
    <property type="term" value="F:oxidoreductase activity, acting on the CH-OH group of donors, NAD or NADP as acceptor"/>
    <property type="evidence" value="ECO:0000318"/>
    <property type="project" value="GO_Central"/>
</dbReference>
<dbReference type="GO" id="GO:0006694">
    <property type="term" value="P:steroid biosynthetic process"/>
    <property type="evidence" value="ECO:0007669"/>
    <property type="project" value="InterPro"/>
</dbReference>
<dbReference type="CDD" id="cd09812">
    <property type="entry name" value="3b-HSD_like_1_SDR_e"/>
    <property type="match status" value="1"/>
</dbReference>
<dbReference type="FunFam" id="3.40.50.720:FF:000138">
    <property type="entry name" value="Short-chain dehydrogenase/reductase family 42E member 1"/>
    <property type="match status" value="1"/>
</dbReference>
<dbReference type="Gene3D" id="3.40.50.720">
    <property type="entry name" value="NAD(P)-binding Rossmann-like Domain"/>
    <property type="match status" value="1"/>
</dbReference>
<dbReference type="InterPro" id="IPR002225">
    <property type="entry name" value="3Beta_OHSteriod_DH/Estase"/>
</dbReference>
<dbReference type="InterPro" id="IPR050177">
    <property type="entry name" value="Lipid_A_modif_metabolic_enz"/>
</dbReference>
<dbReference type="InterPro" id="IPR036291">
    <property type="entry name" value="NAD(P)-bd_dom_sf"/>
</dbReference>
<dbReference type="PANTHER" id="PTHR43245">
    <property type="entry name" value="BIFUNCTIONAL POLYMYXIN RESISTANCE PROTEIN ARNA"/>
    <property type="match status" value="1"/>
</dbReference>
<dbReference type="PANTHER" id="PTHR43245:SF51">
    <property type="entry name" value="SHORT CHAIN DEHYDROGENASE_REDUCTASE FAMILY 42E, MEMBER 2"/>
    <property type="match status" value="1"/>
</dbReference>
<dbReference type="Pfam" id="PF01073">
    <property type="entry name" value="3Beta_HSD"/>
    <property type="match status" value="1"/>
</dbReference>
<dbReference type="SUPFAM" id="SSF51735">
    <property type="entry name" value="NAD(P)-binding Rossmann-fold domains"/>
    <property type="match status" value="1"/>
</dbReference>
<sequence>MDSHKSPKETVLITGGGGYFGFRLGCALNLLGVHVILFDISHPAQTIPEGIRFILGDIRCLSDIENAFQGVDVACVFHIASYGMSGREQLNRSLIEEINVGGTDNILQACRRRGVPRLVYTSTFNVIFGGQVIRNGDESLPYLPLHLHPDHYSRTKSIAEKKVLSANGTALERGGGVLSTCALRPAGIYGPGEQRHLPRIVSYIEKGLFRFVYGDPKSLVEFVHVDNLVQAHILASEALKANKGHIAAGQPYFISDGRPVNNFEFFRPLVEGLGYKFPSTRLPLTLIYCFAFLTEMTHFILGRLYNFQPFLTRTEVYKTGVTHYFSLEKARKELGYEAQPFDLQEAVEWFKAHGHGRRPGSCDSKCLVWDGLVILLVVTVVLVWLLPSVILSM</sequence>
<evidence type="ECO:0000250" key="1"/>
<evidence type="ECO:0000250" key="2">
    <source>
        <dbReference type="UniProtKB" id="Q8WUS8"/>
    </source>
</evidence>
<evidence type="ECO:0000255" key="3"/>
<evidence type="ECO:0000305" key="4"/>
<feature type="chain" id="PRO_0000331753" description="Short-chain dehydrogenase/reductase family 42E member 1">
    <location>
        <begin position="1"/>
        <end position="393"/>
    </location>
</feature>
<feature type="transmembrane region" description="Helical" evidence="3">
    <location>
        <begin position="282"/>
        <end position="302"/>
    </location>
</feature>
<feature type="transmembrane region" description="Helical" evidence="3">
    <location>
        <begin position="371"/>
        <end position="391"/>
    </location>
</feature>
<feature type="active site" description="Proton acceptor" evidence="1">
    <location>
        <position position="152"/>
    </location>
</feature>
<feature type="binding site" evidence="1">
    <location>
        <position position="156"/>
    </location>
    <ligand>
        <name>NAD(+)</name>
        <dbReference type="ChEBI" id="CHEBI:57540"/>
    </ligand>
</feature>
<feature type="sequence conflict" description="In Ref. 1; AAX46671." evidence="4" ref="1">
    <original>H</original>
    <variation>R</variation>
    <location>
        <position position="42"/>
    </location>
</feature>
<feature type="sequence conflict" description="In Ref. 2; AAI09695." evidence="4" ref="2">
    <original>I</original>
    <variation>T</variation>
    <location>
        <position position="233"/>
    </location>
</feature>
<feature type="sequence conflict" description="In Ref. 1; AAX46671." evidence="4" ref="1">
    <original>V</original>
    <variation>F</variation>
    <location>
        <position position="316"/>
    </location>
</feature>
<feature type="sequence conflict" description="In Ref. 1; AAX46671." evidence="4" ref="1">
    <original>V</original>
    <variation>I</variation>
    <location>
        <position position="321"/>
    </location>
</feature>
<feature type="sequence conflict" description="In Ref. 1; AAX46671." evidence="4" ref="1">
    <original>S</original>
    <variation>T</variation>
    <location>
        <position position="326"/>
    </location>
</feature>
<accession>Q32L94</accession>
<accession>Q58CX3</accession>
<gene>
    <name type="primary">SDR42E1</name>
</gene>
<organism>
    <name type="scientific">Bos taurus</name>
    <name type="common">Bovine</name>
    <dbReference type="NCBI Taxonomy" id="9913"/>
    <lineage>
        <taxon>Eukaryota</taxon>
        <taxon>Metazoa</taxon>
        <taxon>Chordata</taxon>
        <taxon>Craniata</taxon>
        <taxon>Vertebrata</taxon>
        <taxon>Euteleostomi</taxon>
        <taxon>Mammalia</taxon>
        <taxon>Eutheria</taxon>
        <taxon>Laurasiatheria</taxon>
        <taxon>Artiodactyla</taxon>
        <taxon>Ruminantia</taxon>
        <taxon>Pecora</taxon>
        <taxon>Bovidae</taxon>
        <taxon>Bovinae</taxon>
        <taxon>Bos</taxon>
    </lineage>
</organism>
<reference key="1">
    <citation type="journal article" date="2005" name="BMC Genomics">
        <title>Characterization of 954 bovine full-CDS cDNA sequences.</title>
        <authorList>
            <person name="Harhay G.P."/>
            <person name="Sonstegard T.S."/>
            <person name="Keele J.W."/>
            <person name="Heaton M.P."/>
            <person name="Clawson M.L."/>
            <person name="Snelling W.M."/>
            <person name="Wiedmann R.T."/>
            <person name="Van Tassell C.P."/>
            <person name="Smith T.P.L."/>
        </authorList>
    </citation>
    <scope>NUCLEOTIDE SEQUENCE [LARGE SCALE MRNA]</scope>
</reference>
<reference key="2">
    <citation type="submission" date="2005-11" db="EMBL/GenBank/DDBJ databases">
        <authorList>
            <consortium name="NIH - Mammalian Gene Collection (MGC) project"/>
        </authorList>
    </citation>
    <scope>NUCLEOTIDE SEQUENCE [LARGE SCALE MRNA]</scope>
    <source>
        <strain>Crossbred X Angus</strain>
        <tissue>Liver</tissue>
    </source>
</reference>